<name>JDP2_RAT</name>
<proteinExistence type="evidence at protein level"/>
<gene>
    <name type="primary">Jdp2</name>
    <name type="synonym">Jdp-2</name>
    <name type="synonym">Jundm2</name>
    <name type="synonym">Jundp2</name>
</gene>
<reference key="1">
    <citation type="journal article" date="1997" name="Mol. Cell. Biol.">
        <title>Isolation of an AP-1 repressor by a novel method for detecting protein-protein interactions.</title>
        <authorList>
            <person name="Aronheim A."/>
            <person name="Zandi E."/>
            <person name="Hennemann H."/>
            <person name="Elledge S.J."/>
            <person name="Karin M."/>
        </authorList>
    </citation>
    <scope>NUCLEOTIDE SEQUENCE [MRNA]</scope>
    <scope>FUNCTION</scope>
    <scope>INTERACTION WITH JUN; JUNB AND JUND</scope>
    <scope>DNA-BINDING</scope>
    <source>
        <tissue>Pituitary</tissue>
    </source>
</reference>
<reference key="2">
    <citation type="journal article" date="1998" name="Curr. Biol.">
        <title>The ras recruitment system, a novel approach to the study of protein-protein interactions.</title>
        <authorList>
            <person name="Broder Y.C."/>
            <person name="Katz S."/>
            <person name="Aronheim A."/>
        </authorList>
    </citation>
    <scope>INTERACTION WITH CEBPG</scope>
</reference>
<organism>
    <name type="scientific">Rattus norvegicus</name>
    <name type="common">Rat</name>
    <dbReference type="NCBI Taxonomy" id="10116"/>
    <lineage>
        <taxon>Eukaryota</taxon>
        <taxon>Metazoa</taxon>
        <taxon>Chordata</taxon>
        <taxon>Craniata</taxon>
        <taxon>Vertebrata</taxon>
        <taxon>Euteleostomi</taxon>
        <taxon>Mammalia</taxon>
        <taxon>Eutheria</taxon>
        <taxon>Euarchontoglires</taxon>
        <taxon>Glires</taxon>
        <taxon>Rodentia</taxon>
        <taxon>Myomorpha</taxon>
        <taxon>Muroidea</taxon>
        <taxon>Muridae</taxon>
        <taxon>Murinae</taxon>
        <taxon>Rattus</taxon>
    </lineage>
</organism>
<comment type="function">
    <text evidence="1 5">Component of the AP-1 transcription factor that represses transactivation mediated by the Jun family of proteins. Involved in a variety of transcriptional responses associated with AP-1, such as UV-induced apoptosis, cell differentiation, tumorigenesis and antitumogeneris. Can also function as a repressor by recruiting histone deacetylase 3/HDAC3 to the promoter region of JUN. May control transcription via direct regulation of the modification of histones and the assembly of chromatin (By similarity).</text>
</comment>
<comment type="subunit">
    <text evidence="1 5 6">Interacts with IRF2BP1 (By similarity). Forms homodimer or heterodimer with JUN, JUNB, JUND, CEBPG and ATF2 thereby inhibiting transactivation by JUN, ATF2 and CEBPG (By similarity). Binds multiple DNA elements such as cAMP-response element (CRE) and TPA response element (TRE) either as homodimer or heterodimer.</text>
</comment>
<comment type="subcellular location">
    <subcellularLocation>
        <location evidence="7">Nucleus</location>
    </subcellularLocation>
</comment>
<comment type="PTM">
    <text evidence="1">Phosphorylation of Thr-148 by MAPK8 in response to different stress conditions such as, UV irradiation, oxidatives stress and anisomycin treatments.</text>
</comment>
<comment type="PTM">
    <text evidence="1">Polyubiquitinated; probably by IRF2BP1.</text>
</comment>
<comment type="similarity">
    <text evidence="7">Belongs to the bZIP family. ATF subfamily.</text>
</comment>
<evidence type="ECO:0000250" key="1"/>
<evidence type="ECO:0000250" key="2">
    <source>
        <dbReference type="UniProtKB" id="Q8WYK2"/>
    </source>
</evidence>
<evidence type="ECO:0000255" key="3">
    <source>
        <dbReference type="PROSITE-ProRule" id="PRU00978"/>
    </source>
</evidence>
<evidence type="ECO:0000256" key="4">
    <source>
        <dbReference type="SAM" id="MobiDB-lite"/>
    </source>
</evidence>
<evidence type="ECO:0000269" key="5">
    <source>
    </source>
</evidence>
<evidence type="ECO:0000269" key="6">
    <source>
    </source>
</evidence>
<evidence type="ECO:0000305" key="7"/>
<dbReference type="EMBL" id="U53449">
    <property type="protein sequence ID" value="AAC02258.1"/>
    <property type="molecule type" value="mRNA"/>
</dbReference>
<dbReference type="RefSeq" id="NP_446346.1">
    <property type="nucleotide sequence ID" value="NM_053894.3"/>
</dbReference>
<dbReference type="SMR" id="Q78E65"/>
<dbReference type="BioGRID" id="250557">
    <property type="interactions" value="1"/>
</dbReference>
<dbReference type="FunCoup" id="Q78E65">
    <property type="interactions" value="431"/>
</dbReference>
<dbReference type="STRING" id="10116.ENSRNOP00000011339"/>
<dbReference type="PhosphoSitePlus" id="Q78E65"/>
<dbReference type="PaxDb" id="10116-ENSRNOP00000011339"/>
<dbReference type="GeneID" id="116674"/>
<dbReference type="KEGG" id="rno:116674"/>
<dbReference type="UCSC" id="RGD:621611">
    <property type="organism name" value="rat"/>
</dbReference>
<dbReference type="AGR" id="RGD:621611"/>
<dbReference type="CTD" id="122953"/>
<dbReference type="RGD" id="621611">
    <property type="gene designation" value="Jdp2"/>
</dbReference>
<dbReference type="eggNOG" id="KOG1414">
    <property type="taxonomic scope" value="Eukaryota"/>
</dbReference>
<dbReference type="HOGENOM" id="CLU_088612_0_1_1"/>
<dbReference type="InParanoid" id="Q78E65"/>
<dbReference type="OrthoDB" id="2596881at2759"/>
<dbReference type="PhylomeDB" id="Q78E65"/>
<dbReference type="TreeFam" id="TF326301"/>
<dbReference type="PRO" id="PR:Q78E65"/>
<dbReference type="Proteomes" id="UP000002494">
    <property type="component" value="Chromosome 6"/>
</dbReference>
<dbReference type="Bgee" id="ENSRNOG00000008224">
    <property type="expression patterns" value="Expressed in frontal cortex and 20 other cell types or tissues"/>
</dbReference>
<dbReference type="GO" id="GO:0005634">
    <property type="term" value="C:nucleus"/>
    <property type="evidence" value="ECO:0000266"/>
    <property type="project" value="RGD"/>
</dbReference>
<dbReference type="GO" id="GO:0090575">
    <property type="term" value="C:RNA polymerase II transcription regulator complex"/>
    <property type="evidence" value="ECO:0000266"/>
    <property type="project" value="RGD"/>
</dbReference>
<dbReference type="GO" id="GO:0035497">
    <property type="term" value="F:cAMP response element binding"/>
    <property type="evidence" value="ECO:0000266"/>
    <property type="project" value="RGD"/>
</dbReference>
<dbReference type="GO" id="GO:0003682">
    <property type="term" value="F:chromatin binding"/>
    <property type="evidence" value="ECO:0000266"/>
    <property type="project" value="RGD"/>
</dbReference>
<dbReference type="GO" id="GO:0003677">
    <property type="term" value="F:DNA binding"/>
    <property type="evidence" value="ECO:0000266"/>
    <property type="project" value="RGD"/>
</dbReference>
<dbReference type="GO" id="GO:0003700">
    <property type="term" value="F:DNA-binding transcription factor activity"/>
    <property type="evidence" value="ECO:0000314"/>
    <property type="project" value="RGD"/>
</dbReference>
<dbReference type="GO" id="GO:0000981">
    <property type="term" value="F:DNA-binding transcription factor activity, RNA polymerase II-specific"/>
    <property type="evidence" value="ECO:0000318"/>
    <property type="project" value="GO_Central"/>
</dbReference>
<dbReference type="GO" id="GO:0001227">
    <property type="term" value="F:DNA-binding transcription repressor activity, RNA polymerase II-specific"/>
    <property type="evidence" value="ECO:0000266"/>
    <property type="project" value="RGD"/>
</dbReference>
<dbReference type="GO" id="GO:0003690">
    <property type="term" value="F:double-stranded DNA binding"/>
    <property type="evidence" value="ECO:0000314"/>
    <property type="project" value="RGD"/>
</dbReference>
<dbReference type="GO" id="GO:0140713">
    <property type="term" value="F:histone chaperone activity"/>
    <property type="evidence" value="ECO:0000266"/>
    <property type="project" value="RGD"/>
</dbReference>
<dbReference type="GO" id="GO:0042826">
    <property type="term" value="F:histone deacetylase binding"/>
    <property type="evidence" value="ECO:0000266"/>
    <property type="project" value="RGD"/>
</dbReference>
<dbReference type="GO" id="GO:0043522">
    <property type="term" value="F:leucine zipper domain binding"/>
    <property type="evidence" value="ECO:0000266"/>
    <property type="project" value="RGD"/>
</dbReference>
<dbReference type="GO" id="GO:0046982">
    <property type="term" value="F:protein heterodimerization activity"/>
    <property type="evidence" value="ECO:0000266"/>
    <property type="project" value="RGD"/>
</dbReference>
<dbReference type="GO" id="GO:0042803">
    <property type="term" value="F:protein homodimerization activity"/>
    <property type="evidence" value="ECO:0000266"/>
    <property type="project" value="RGD"/>
</dbReference>
<dbReference type="GO" id="GO:0044877">
    <property type="term" value="F:protein-containing complex binding"/>
    <property type="evidence" value="ECO:0000314"/>
    <property type="project" value="RGD"/>
</dbReference>
<dbReference type="GO" id="GO:0000978">
    <property type="term" value="F:RNA polymerase II cis-regulatory region sequence-specific DNA binding"/>
    <property type="evidence" value="ECO:0000266"/>
    <property type="project" value="RGD"/>
</dbReference>
<dbReference type="GO" id="GO:1990837">
    <property type="term" value="F:sequence-specific double-stranded DNA binding"/>
    <property type="evidence" value="ECO:0000266"/>
    <property type="project" value="RGD"/>
</dbReference>
<dbReference type="GO" id="GO:0006338">
    <property type="term" value="P:chromatin remodeling"/>
    <property type="evidence" value="ECO:0000266"/>
    <property type="project" value="RGD"/>
</dbReference>
<dbReference type="GO" id="GO:0045444">
    <property type="term" value="P:fat cell differentiation"/>
    <property type="evidence" value="ECO:0000266"/>
    <property type="project" value="RGD"/>
</dbReference>
<dbReference type="GO" id="GO:0045599">
    <property type="term" value="P:negative regulation of fat cell differentiation"/>
    <property type="evidence" value="ECO:0000266"/>
    <property type="project" value="RGD"/>
</dbReference>
<dbReference type="GO" id="GO:0000122">
    <property type="term" value="P:negative regulation of transcription by RNA polymerase II"/>
    <property type="evidence" value="ECO:0000314"/>
    <property type="project" value="RGD"/>
</dbReference>
<dbReference type="GO" id="GO:0006357">
    <property type="term" value="P:regulation of transcription by RNA polymerase II"/>
    <property type="evidence" value="ECO:0000266"/>
    <property type="project" value="RGD"/>
</dbReference>
<dbReference type="FunFam" id="1.20.5.170:FF:000006">
    <property type="entry name" value="fos-related antigen 2 isoform X1"/>
    <property type="match status" value="1"/>
</dbReference>
<dbReference type="Gene3D" id="1.20.5.170">
    <property type="match status" value="1"/>
</dbReference>
<dbReference type="InterPro" id="IPR000837">
    <property type="entry name" value="AP-1"/>
</dbReference>
<dbReference type="InterPro" id="IPR004827">
    <property type="entry name" value="bZIP"/>
</dbReference>
<dbReference type="InterPro" id="IPR046347">
    <property type="entry name" value="bZIP_sf"/>
</dbReference>
<dbReference type="PANTHER" id="PTHR23351">
    <property type="entry name" value="FOS TRANSCRIPTION FACTOR-RELATED"/>
    <property type="match status" value="1"/>
</dbReference>
<dbReference type="PANTHER" id="PTHR23351:SF10">
    <property type="entry name" value="JUN DIMERIZATION PROTEIN 2"/>
    <property type="match status" value="1"/>
</dbReference>
<dbReference type="Pfam" id="PF00170">
    <property type="entry name" value="bZIP_1"/>
    <property type="match status" value="1"/>
</dbReference>
<dbReference type="PRINTS" id="PR00042">
    <property type="entry name" value="LEUZIPPRFOS"/>
</dbReference>
<dbReference type="SMART" id="SM00338">
    <property type="entry name" value="BRLZ"/>
    <property type="match status" value="1"/>
</dbReference>
<dbReference type="SUPFAM" id="SSF57959">
    <property type="entry name" value="Leucine zipper domain"/>
    <property type="match status" value="1"/>
</dbReference>
<dbReference type="PROSITE" id="PS50217">
    <property type="entry name" value="BZIP"/>
    <property type="match status" value="1"/>
</dbReference>
<dbReference type="PROSITE" id="PS00036">
    <property type="entry name" value="BZIP_BASIC"/>
    <property type="match status" value="1"/>
</dbReference>
<protein>
    <recommendedName>
        <fullName>Jun dimerization protein 2</fullName>
    </recommendedName>
</protein>
<feature type="chain" id="PRO_0000331132" description="Jun dimerization protein 2">
    <location>
        <begin position="1"/>
        <end position="163"/>
    </location>
</feature>
<feature type="domain" description="bZIP" evidence="3">
    <location>
        <begin position="72"/>
        <end position="135"/>
    </location>
</feature>
<feature type="region of interest" description="Disordered" evidence="4">
    <location>
        <begin position="1"/>
        <end position="20"/>
    </location>
</feature>
<feature type="region of interest" description="Disordered" evidence="4">
    <location>
        <begin position="59"/>
        <end position="89"/>
    </location>
</feature>
<feature type="region of interest" description="Basic motif" evidence="3">
    <location>
        <begin position="74"/>
        <end position="96"/>
    </location>
</feature>
<feature type="region of interest" description="Leucine-zipper" evidence="3">
    <location>
        <begin position="100"/>
        <end position="128"/>
    </location>
</feature>
<feature type="modified residue" description="Phosphothreonine; by MAPK8" evidence="2">
    <location>
        <position position="148"/>
    </location>
</feature>
<feature type="cross-link" description="Glycyl lysine isopeptide (Lys-Gly) (interchain with G-Cter in SUMO2)" evidence="2">
    <location>
        <position position="65"/>
    </location>
</feature>
<sequence length="163" mass="18675">MMPGQIPDPSVTAGSLPGLGPLTGLPSSALTTEELKYADIRNIGAMIAPLHFLEVKLGKRPQPVKSELDEEEERRKRRREKNKVAAARCRNKKKERTEFLQRESERLELMNAELKTQIEELKLERQQLILMLNRHRPTCIVRTDSVRTPESEGNPLLEQLDKK</sequence>
<accession>Q78E65</accession>
<keyword id="KW-0238">DNA-binding</keyword>
<keyword id="KW-1017">Isopeptide bond</keyword>
<keyword id="KW-0539">Nucleus</keyword>
<keyword id="KW-0597">Phosphoprotein</keyword>
<keyword id="KW-1185">Reference proteome</keyword>
<keyword id="KW-0678">Repressor</keyword>
<keyword id="KW-0804">Transcription</keyword>
<keyword id="KW-0805">Transcription regulation</keyword>
<keyword id="KW-0832">Ubl conjugation</keyword>